<gene>
    <name evidence="1" type="primary">fadB</name>
    <name type="ordered locus">EcSMS35_4227</name>
</gene>
<feature type="chain" id="PRO_1000186042" description="Fatty acid oxidation complex subunit alpha">
    <location>
        <begin position="1"/>
        <end position="729"/>
    </location>
</feature>
<feature type="region of interest" description="Enoyl-CoA hydratase/isomerase" evidence="1">
    <location>
        <begin position="1"/>
        <end position="189"/>
    </location>
</feature>
<feature type="region of interest" description="3-hydroxyacyl-CoA dehydrogenase" evidence="1">
    <location>
        <begin position="311"/>
        <end position="729"/>
    </location>
</feature>
<feature type="region of interest" description="Disordered" evidence="2">
    <location>
        <begin position="708"/>
        <end position="729"/>
    </location>
</feature>
<feature type="active site" description="For 3-hydroxyacyl-CoA dehydrogenase activity" evidence="1">
    <location>
        <position position="450"/>
    </location>
</feature>
<feature type="binding site" evidence="1">
    <location>
        <position position="296"/>
    </location>
    <ligand>
        <name>substrate</name>
    </ligand>
</feature>
<feature type="binding site" evidence="1">
    <location>
        <position position="324"/>
    </location>
    <ligand>
        <name>NAD(+)</name>
        <dbReference type="ChEBI" id="CHEBI:57540"/>
    </ligand>
</feature>
<feature type="binding site" evidence="1">
    <location>
        <position position="343"/>
    </location>
    <ligand>
        <name>NAD(+)</name>
        <dbReference type="ChEBI" id="CHEBI:57540"/>
    </ligand>
</feature>
<feature type="binding site" evidence="1">
    <location>
        <begin position="400"/>
        <end position="402"/>
    </location>
    <ligand>
        <name>NAD(+)</name>
        <dbReference type="ChEBI" id="CHEBI:57540"/>
    </ligand>
</feature>
<feature type="binding site" evidence="1">
    <location>
        <position position="407"/>
    </location>
    <ligand>
        <name>NAD(+)</name>
        <dbReference type="ChEBI" id="CHEBI:57540"/>
    </ligand>
</feature>
<feature type="binding site" evidence="1">
    <location>
        <position position="429"/>
    </location>
    <ligand>
        <name>NAD(+)</name>
        <dbReference type="ChEBI" id="CHEBI:57540"/>
    </ligand>
</feature>
<feature type="binding site" evidence="1">
    <location>
        <position position="453"/>
    </location>
    <ligand>
        <name>NAD(+)</name>
        <dbReference type="ChEBI" id="CHEBI:57540"/>
    </ligand>
</feature>
<feature type="binding site" evidence="1">
    <location>
        <position position="500"/>
    </location>
    <ligand>
        <name>substrate</name>
    </ligand>
</feature>
<feature type="binding site" evidence="1">
    <location>
        <position position="660"/>
    </location>
    <ligand>
        <name>substrate</name>
    </ligand>
</feature>
<feature type="site" description="Important for catalytic activity" evidence="1">
    <location>
        <position position="119"/>
    </location>
</feature>
<feature type="site" description="Important for catalytic activity" evidence="1">
    <location>
        <position position="139"/>
    </location>
</feature>
<accession>B1LM32</accession>
<proteinExistence type="inferred from homology"/>
<organism>
    <name type="scientific">Escherichia coli (strain SMS-3-5 / SECEC)</name>
    <dbReference type="NCBI Taxonomy" id="439855"/>
    <lineage>
        <taxon>Bacteria</taxon>
        <taxon>Pseudomonadati</taxon>
        <taxon>Pseudomonadota</taxon>
        <taxon>Gammaproteobacteria</taxon>
        <taxon>Enterobacterales</taxon>
        <taxon>Enterobacteriaceae</taxon>
        <taxon>Escherichia</taxon>
    </lineage>
</organism>
<dbReference type="EC" id="4.2.1.17" evidence="1"/>
<dbReference type="EC" id="5.1.2.3" evidence="1"/>
<dbReference type="EC" id="5.3.3.8" evidence="1"/>
<dbReference type="EC" id="1.1.1.35" evidence="1"/>
<dbReference type="EMBL" id="CP000970">
    <property type="protein sequence ID" value="ACB20011.1"/>
    <property type="molecule type" value="Genomic_DNA"/>
</dbReference>
<dbReference type="RefSeq" id="WP_000965900.1">
    <property type="nucleotide sequence ID" value="NC_010498.1"/>
</dbReference>
<dbReference type="SMR" id="B1LM32"/>
<dbReference type="KEGG" id="ecm:EcSMS35_4227"/>
<dbReference type="HOGENOM" id="CLU_009834_16_3_6"/>
<dbReference type="UniPathway" id="UPA00659"/>
<dbReference type="Proteomes" id="UP000007011">
    <property type="component" value="Chromosome"/>
</dbReference>
<dbReference type="GO" id="GO:0036125">
    <property type="term" value="C:fatty acid beta-oxidation multienzyme complex"/>
    <property type="evidence" value="ECO:0007669"/>
    <property type="project" value="InterPro"/>
</dbReference>
<dbReference type="GO" id="GO:0008692">
    <property type="term" value="F:3-hydroxybutyryl-CoA epimerase activity"/>
    <property type="evidence" value="ECO:0007669"/>
    <property type="project" value="UniProtKB-UniRule"/>
</dbReference>
<dbReference type="GO" id="GO:0004165">
    <property type="term" value="F:delta(3)-delta(2)-enoyl-CoA isomerase activity"/>
    <property type="evidence" value="ECO:0007669"/>
    <property type="project" value="UniProtKB-UniRule"/>
</dbReference>
<dbReference type="GO" id="GO:0004300">
    <property type="term" value="F:enoyl-CoA hydratase activity"/>
    <property type="evidence" value="ECO:0007669"/>
    <property type="project" value="UniProtKB-UniRule"/>
</dbReference>
<dbReference type="GO" id="GO:0016509">
    <property type="term" value="F:long-chain-3-hydroxyacyl-CoA dehydrogenase activity"/>
    <property type="evidence" value="ECO:0007669"/>
    <property type="project" value="TreeGrafter"/>
</dbReference>
<dbReference type="GO" id="GO:0070403">
    <property type="term" value="F:NAD+ binding"/>
    <property type="evidence" value="ECO:0007669"/>
    <property type="project" value="InterPro"/>
</dbReference>
<dbReference type="GO" id="GO:0006635">
    <property type="term" value="P:fatty acid beta-oxidation"/>
    <property type="evidence" value="ECO:0007669"/>
    <property type="project" value="UniProtKB-UniRule"/>
</dbReference>
<dbReference type="CDD" id="cd06558">
    <property type="entry name" value="crotonase-like"/>
    <property type="match status" value="1"/>
</dbReference>
<dbReference type="FunFam" id="1.10.1040.50:FF:000001">
    <property type="entry name" value="Fatty acid oxidation complex subunit alpha"/>
    <property type="match status" value="1"/>
</dbReference>
<dbReference type="FunFam" id="3.90.226.10:FF:000018">
    <property type="entry name" value="Fatty acid oxidation complex subunit alpha"/>
    <property type="match status" value="1"/>
</dbReference>
<dbReference type="FunFam" id="3.40.50.720:FF:000009">
    <property type="entry name" value="Fatty oxidation complex, alpha subunit"/>
    <property type="match status" value="1"/>
</dbReference>
<dbReference type="Gene3D" id="1.10.1040.50">
    <property type="match status" value="1"/>
</dbReference>
<dbReference type="Gene3D" id="3.90.226.10">
    <property type="entry name" value="2-enoyl-CoA Hydratase, Chain A, domain 1"/>
    <property type="match status" value="1"/>
</dbReference>
<dbReference type="Gene3D" id="3.40.50.720">
    <property type="entry name" value="NAD(P)-binding Rossmann-like Domain"/>
    <property type="match status" value="1"/>
</dbReference>
<dbReference type="HAMAP" id="MF_01621">
    <property type="entry name" value="FadB"/>
    <property type="match status" value="1"/>
</dbReference>
<dbReference type="InterPro" id="IPR006180">
    <property type="entry name" value="3-OHacyl-CoA_DH_CS"/>
</dbReference>
<dbReference type="InterPro" id="IPR006176">
    <property type="entry name" value="3-OHacyl-CoA_DH_NAD-bd"/>
</dbReference>
<dbReference type="InterPro" id="IPR006108">
    <property type="entry name" value="3HC_DH_C"/>
</dbReference>
<dbReference type="InterPro" id="IPR008927">
    <property type="entry name" value="6-PGluconate_DH-like_C_sf"/>
</dbReference>
<dbReference type="InterPro" id="IPR029045">
    <property type="entry name" value="ClpP/crotonase-like_dom_sf"/>
</dbReference>
<dbReference type="InterPro" id="IPR018376">
    <property type="entry name" value="Enoyl-CoA_hyd/isom_CS"/>
</dbReference>
<dbReference type="InterPro" id="IPR001753">
    <property type="entry name" value="Enoyl-CoA_hydra/iso"/>
</dbReference>
<dbReference type="InterPro" id="IPR050136">
    <property type="entry name" value="FA_oxidation_alpha_subunit"/>
</dbReference>
<dbReference type="InterPro" id="IPR012799">
    <property type="entry name" value="FadB"/>
</dbReference>
<dbReference type="InterPro" id="IPR036291">
    <property type="entry name" value="NAD(P)-bd_dom_sf"/>
</dbReference>
<dbReference type="NCBIfam" id="TIGR02437">
    <property type="entry name" value="FadB"/>
    <property type="match status" value="1"/>
</dbReference>
<dbReference type="NCBIfam" id="NF008727">
    <property type="entry name" value="PRK11730.1"/>
    <property type="match status" value="1"/>
</dbReference>
<dbReference type="PANTHER" id="PTHR43612">
    <property type="entry name" value="TRIFUNCTIONAL ENZYME SUBUNIT ALPHA"/>
    <property type="match status" value="1"/>
</dbReference>
<dbReference type="PANTHER" id="PTHR43612:SF3">
    <property type="entry name" value="TRIFUNCTIONAL ENZYME SUBUNIT ALPHA, MITOCHONDRIAL"/>
    <property type="match status" value="1"/>
</dbReference>
<dbReference type="Pfam" id="PF00725">
    <property type="entry name" value="3HCDH"/>
    <property type="match status" value="2"/>
</dbReference>
<dbReference type="Pfam" id="PF02737">
    <property type="entry name" value="3HCDH_N"/>
    <property type="match status" value="1"/>
</dbReference>
<dbReference type="Pfam" id="PF00378">
    <property type="entry name" value="ECH_1"/>
    <property type="match status" value="1"/>
</dbReference>
<dbReference type="SUPFAM" id="SSF48179">
    <property type="entry name" value="6-phosphogluconate dehydrogenase C-terminal domain-like"/>
    <property type="match status" value="2"/>
</dbReference>
<dbReference type="SUPFAM" id="SSF52096">
    <property type="entry name" value="ClpP/crotonase"/>
    <property type="match status" value="1"/>
</dbReference>
<dbReference type="SUPFAM" id="SSF51735">
    <property type="entry name" value="NAD(P)-binding Rossmann-fold domains"/>
    <property type="match status" value="1"/>
</dbReference>
<dbReference type="PROSITE" id="PS00067">
    <property type="entry name" value="3HCDH"/>
    <property type="match status" value="1"/>
</dbReference>
<dbReference type="PROSITE" id="PS00166">
    <property type="entry name" value="ENOYL_COA_HYDRATASE"/>
    <property type="match status" value="1"/>
</dbReference>
<evidence type="ECO:0000255" key="1">
    <source>
        <dbReference type="HAMAP-Rule" id="MF_01621"/>
    </source>
</evidence>
<evidence type="ECO:0000256" key="2">
    <source>
        <dbReference type="SAM" id="MobiDB-lite"/>
    </source>
</evidence>
<reference key="1">
    <citation type="journal article" date="2008" name="J. Bacteriol.">
        <title>Insights into the environmental resistance gene pool from the genome sequence of the multidrug-resistant environmental isolate Escherichia coli SMS-3-5.</title>
        <authorList>
            <person name="Fricke W.F."/>
            <person name="Wright M.S."/>
            <person name="Lindell A.H."/>
            <person name="Harkins D.M."/>
            <person name="Baker-Austin C."/>
            <person name="Ravel J."/>
            <person name="Stepanauskas R."/>
        </authorList>
    </citation>
    <scope>NUCLEOTIDE SEQUENCE [LARGE SCALE GENOMIC DNA]</scope>
    <source>
        <strain>SMS-3-5 / SECEC</strain>
    </source>
</reference>
<keyword id="KW-0276">Fatty acid metabolism</keyword>
<keyword id="KW-0413">Isomerase</keyword>
<keyword id="KW-0442">Lipid degradation</keyword>
<keyword id="KW-0443">Lipid metabolism</keyword>
<keyword id="KW-0456">Lyase</keyword>
<keyword id="KW-0511">Multifunctional enzyme</keyword>
<keyword id="KW-0520">NAD</keyword>
<keyword id="KW-0560">Oxidoreductase</keyword>
<name>FADB_ECOSM</name>
<sequence>MLYKGDTLYLDWLEDGIAELVFDAPGSVNKLDTATVASLGEAIGVLEQQSDLKGLLLRSNKAAFIVGADITEFLSLFLVPEEQLSQWLHFANSVFNRLEDLPVPTIAAVNGYALGGGCECVLATDYRLATPDLRIGLPETKLGIMPGFGGSVRMPRMLGADSALEIIAAGKDVGADQALKIGLVDGVVKAEKLIEGAMAILRQAINGDLDWKAKRQPKLEPLKLSEIEATMSFTIAKGMVAQTAGKHYPAPITAVKTIEAAARFGREEALNLENKSFVPLAHTNEARALVGIFLNDQYVKGKAKKLTKDVETPKQAAVLGAGIMGGGIAYQSAWKGVPVVMKDINDKSLTLGMTEAAKLLNKQLERGKIDGLKLAGVISTIHPTLDYAGFDRVDVVVEAVVENPKVKKAVLAETEQKVRPDTVLASNTSTIPISELANALERPENFCGMHFFNPVHRMPLVEIIRGEKSSDETIAKVVAWASKMGKTPIVVNDCPGFFVNRVLFPYFAGFSQLLRDGADFRKIDKVMEKQFGWPMGPAYLLDVVGIDTAHHAQAVMAAGFPQRMQKDYRDAIDALFDANRFGQKNGLGFWRYKEDSKGKPKKEEDAVVDDLLAEVSQPKRDFSEEEIIARMMIPMVNEVVRCLEEGIIATPAEADMALVYGLGFPPFHGGAFRWLDTLGSAKYLDMAQQYQHLGPLYEVPEGLRNKARHNEPYYPPVEPARPVGDLKTA</sequence>
<comment type="function">
    <text evidence="1">Involved in the aerobic and anaerobic degradation of long-chain fatty acids via beta-oxidation cycle. Catalyzes the formation of 3-oxoacyl-CoA from enoyl-CoA via L-3-hydroxyacyl-CoA. It can also use D-3-hydroxyacyl-CoA and cis-3-enoyl-CoA as substrate.</text>
</comment>
<comment type="catalytic activity">
    <reaction evidence="1">
        <text>a (3S)-3-hydroxyacyl-CoA + NAD(+) = a 3-oxoacyl-CoA + NADH + H(+)</text>
        <dbReference type="Rhea" id="RHEA:22432"/>
        <dbReference type="ChEBI" id="CHEBI:15378"/>
        <dbReference type="ChEBI" id="CHEBI:57318"/>
        <dbReference type="ChEBI" id="CHEBI:57540"/>
        <dbReference type="ChEBI" id="CHEBI:57945"/>
        <dbReference type="ChEBI" id="CHEBI:90726"/>
        <dbReference type="EC" id="1.1.1.35"/>
    </reaction>
</comment>
<comment type="catalytic activity">
    <reaction evidence="1">
        <text>a (3S)-3-hydroxyacyl-CoA = a (2E)-enoyl-CoA + H2O</text>
        <dbReference type="Rhea" id="RHEA:16105"/>
        <dbReference type="ChEBI" id="CHEBI:15377"/>
        <dbReference type="ChEBI" id="CHEBI:57318"/>
        <dbReference type="ChEBI" id="CHEBI:58856"/>
        <dbReference type="EC" id="4.2.1.17"/>
    </reaction>
</comment>
<comment type="catalytic activity">
    <reaction evidence="1">
        <text>a 4-saturated-(3S)-3-hydroxyacyl-CoA = a (3E)-enoyl-CoA + H2O</text>
        <dbReference type="Rhea" id="RHEA:20724"/>
        <dbReference type="ChEBI" id="CHEBI:15377"/>
        <dbReference type="ChEBI" id="CHEBI:58521"/>
        <dbReference type="ChEBI" id="CHEBI:137480"/>
        <dbReference type="EC" id="4.2.1.17"/>
    </reaction>
</comment>
<comment type="catalytic activity">
    <reaction evidence="1">
        <text>(3S)-3-hydroxybutanoyl-CoA = (3R)-3-hydroxybutanoyl-CoA</text>
        <dbReference type="Rhea" id="RHEA:21760"/>
        <dbReference type="ChEBI" id="CHEBI:57315"/>
        <dbReference type="ChEBI" id="CHEBI:57316"/>
        <dbReference type="EC" id="5.1.2.3"/>
    </reaction>
</comment>
<comment type="catalytic activity">
    <reaction evidence="1">
        <text>a (3Z)-enoyl-CoA = a 4-saturated (2E)-enoyl-CoA</text>
        <dbReference type="Rhea" id="RHEA:45900"/>
        <dbReference type="ChEBI" id="CHEBI:85097"/>
        <dbReference type="ChEBI" id="CHEBI:85489"/>
        <dbReference type="EC" id="5.3.3.8"/>
    </reaction>
</comment>
<comment type="catalytic activity">
    <reaction evidence="1">
        <text>a (3E)-enoyl-CoA = a 4-saturated (2E)-enoyl-CoA</text>
        <dbReference type="Rhea" id="RHEA:45228"/>
        <dbReference type="ChEBI" id="CHEBI:58521"/>
        <dbReference type="ChEBI" id="CHEBI:85097"/>
        <dbReference type="EC" id="5.3.3.8"/>
    </reaction>
</comment>
<comment type="pathway">
    <text evidence="1">Lipid metabolism; fatty acid beta-oxidation.</text>
</comment>
<comment type="subunit">
    <text evidence="1">Heterotetramer of two alpha chains (FadB) and two beta chains (FadA).</text>
</comment>
<comment type="similarity">
    <text evidence="1">In the N-terminal section; belongs to the enoyl-CoA hydratase/isomerase family.</text>
</comment>
<comment type="similarity">
    <text evidence="1">In the C-terminal section; belongs to the 3-hydroxyacyl-CoA dehydrogenase family.</text>
</comment>
<protein>
    <recommendedName>
        <fullName evidence="1">Fatty acid oxidation complex subunit alpha</fullName>
    </recommendedName>
    <domain>
        <recommendedName>
            <fullName evidence="1">Enoyl-CoA hydratase/Delta(3)-cis-Delta(2)-trans-enoyl-CoA isomerase/3-hydroxybutyryl-CoA epimerase</fullName>
            <ecNumber evidence="1">4.2.1.17</ecNumber>
            <ecNumber evidence="1">5.1.2.3</ecNumber>
            <ecNumber evidence="1">5.3.3.8</ecNumber>
        </recommendedName>
    </domain>
    <domain>
        <recommendedName>
            <fullName evidence="1">3-hydroxyacyl-CoA dehydrogenase</fullName>
            <ecNumber evidence="1">1.1.1.35</ecNumber>
        </recommendedName>
    </domain>
</protein>